<accession>Q02PF9</accession>
<keyword id="KW-0997">Cell inner membrane</keyword>
<keyword id="KW-1003">Cell membrane</keyword>
<keyword id="KW-0406">Ion transport</keyword>
<keyword id="KW-0472">Membrane</keyword>
<keyword id="KW-0520">NAD</keyword>
<keyword id="KW-0915">Sodium</keyword>
<keyword id="KW-0739">Sodium transport</keyword>
<keyword id="KW-1278">Translocase</keyword>
<keyword id="KW-0812">Transmembrane</keyword>
<keyword id="KW-1133">Transmembrane helix</keyword>
<keyword id="KW-0813">Transport</keyword>
<keyword id="KW-0830">Ubiquinone</keyword>
<comment type="function">
    <text evidence="1">NQR complex catalyzes the reduction of ubiquinone-1 to ubiquinol by two successive reactions, coupled with the transport of Na(+) ions from the cytoplasm to the periplasm. NqrA to NqrE are probably involved in the second step, the conversion of ubisemiquinone to ubiquinol.</text>
</comment>
<comment type="catalytic activity">
    <reaction evidence="1">
        <text>a ubiquinone + n Na(+)(in) + NADH + H(+) = a ubiquinol + n Na(+)(out) + NAD(+)</text>
        <dbReference type="Rhea" id="RHEA:47748"/>
        <dbReference type="Rhea" id="RHEA-COMP:9565"/>
        <dbReference type="Rhea" id="RHEA-COMP:9566"/>
        <dbReference type="ChEBI" id="CHEBI:15378"/>
        <dbReference type="ChEBI" id="CHEBI:16389"/>
        <dbReference type="ChEBI" id="CHEBI:17976"/>
        <dbReference type="ChEBI" id="CHEBI:29101"/>
        <dbReference type="ChEBI" id="CHEBI:57540"/>
        <dbReference type="ChEBI" id="CHEBI:57945"/>
        <dbReference type="EC" id="7.2.1.1"/>
    </reaction>
</comment>
<comment type="subunit">
    <text evidence="1">Composed of six subunits; NqrA, NqrB, NqrC, NqrD, NqrE and NqrF.</text>
</comment>
<comment type="subcellular location">
    <subcellularLocation>
        <location evidence="1">Cell inner membrane</location>
        <topology evidence="1">Multi-pass membrane protein</topology>
    </subcellularLocation>
</comment>
<comment type="similarity">
    <text evidence="1">Belongs to the NqrDE/RnfAE family.</text>
</comment>
<dbReference type="EC" id="7.2.1.1" evidence="1"/>
<dbReference type="EMBL" id="CP000438">
    <property type="protein sequence ID" value="ABJ12234.1"/>
    <property type="molecule type" value="Genomic_DNA"/>
</dbReference>
<dbReference type="RefSeq" id="WP_003091182.1">
    <property type="nucleotide sequence ID" value="NZ_CP034244.1"/>
</dbReference>
<dbReference type="SMR" id="Q02PF9"/>
<dbReference type="GeneID" id="77220513"/>
<dbReference type="KEGG" id="pau:PA14_25340"/>
<dbReference type="PseudoCAP" id="PA14_25340"/>
<dbReference type="HOGENOM" id="CLU_095255_0_0_6"/>
<dbReference type="BioCyc" id="PAER208963:G1G74-2112-MONOMER"/>
<dbReference type="Proteomes" id="UP000000653">
    <property type="component" value="Chromosome"/>
</dbReference>
<dbReference type="GO" id="GO:0009276">
    <property type="term" value="C:Gram-negative-bacterium-type cell wall"/>
    <property type="evidence" value="ECO:0007669"/>
    <property type="project" value="InterPro"/>
</dbReference>
<dbReference type="GO" id="GO:0005886">
    <property type="term" value="C:plasma membrane"/>
    <property type="evidence" value="ECO:0007669"/>
    <property type="project" value="UniProtKB-SubCell"/>
</dbReference>
<dbReference type="GO" id="GO:0016655">
    <property type="term" value="F:oxidoreductase activity, acting on NAD(P)H, quinone or similar compound as acceptor"/>
    <property type="evidence" value="ECO:0007669"/>
    <property type="project" value="UniProtKB-UniRule"/>
</dbReference>
<dbReference type="GO" id="GO:0022904">
    <property type="term" value="P:respiratory electron transport chain"/>
    <property type="evidence" value="ECO:0007669"/>
    <property type="project" value="InterPro"/>
</dbReference>
<dbReference type="GO" id="GO:0006814">
    <property type="term" value="P:sodium ion transport"/>
    <property type="evidence" value="ECO:0007669"/>
    <property type="project" value="UniProtKB-UniRule"/>
</dbReference>
<dbReference type="HAMAP" id="MF_00429">
    <property type="entry name" value="NqrE"/>
    <property type="match status" value="1"/>
</dbReference>
<dbReference type="InterPro" id="IPR003667">
    <property type="entry name" value="NqrDE/RnfAE"/>
</dbReference>
<dbReference type="InterPro" id="IPR050133">
    <property type="entry name" value="NqrDE/RnfAE_oxidrdctase"/>
</dbReference>
<dbReference type="InterPro" id="IPR010967">
    <property type="entry name" value="NqrE"/>
</dbReference>
<dbReference type="NCBIfam" id="TIGR01940">
    <property type="entry name" value="nqrE"/>
    <property type="match status" value="1"/>
</dbReference>
<dbReference type="PANTHER" id="PTHR30335">
    <property type="entry name" value="INTEGRAL MEMBRANE PROTEIN OF SOXR-REDUCING COMPLEX"/>
    <property type="match status" value="1"/>
</dbReference>
<dbReference type="PANTHER" id="PTHR30335:SF1">
    <property type="entry name" value="NA(+)-TRANSLOCATING NADH-QUINONE REDUCTASE SUBUNIT E"/>
    <property type="match status" value="1"/>
</dbReference>
<dbReference type="Pfam" id="PF02508">
    <property type="entry name" value="Rnf-Nqr"/>
    <property type="match status" value="1"/>
</dbReference>
<dbReference type="PIRSF" id="PIRSF006102">
    <property type="entry name" value="NQR_DE"/>
    <property type="match status" value="1"/>
</dbReference>
<organism>
    <name type="scientific">Pseudomonas aeruginosa (strain UCBPP-PA14)</name>
    <dbReference type="NCBI Taxonomy" id="208963"/>
    <lineage>
        <taxon>Bacteria</taxon>
        <taxon>Pseudomonadati</taxon>
        <taxon>Pseudomonadota</taxon>
        <taxon>Gammaproteobacteria</taxon>
        <taxon>Pseudomonadales</taxon>
        <taxon>Pseudomonadaceae</taxon>
        <taxon>Pseudomonas</taxon>
    </lineage>
</organism>
<gene>
    <name evidence="1" type="primary">nqrE</name>
    <name type="ordered locus">PA14_25340</name>
</gene>
<evidence type="ECO:0000255" key="1">
    <source>
        <dbReference type="HAMAP-Rule" id="MF_00429"/>
    </source>
</evidence>
<feature type="chain" id="PRO_1000060208" description="Na(+)-translocating NADH-quinone reductase subunit E">
    <location>
        <begin position="1"/>
        <end position="202"/>
    </location>
</feature>
<feature type="transmembrane region" description="Helical" evidence="1">
    <location>
        <begin position="11"/>
        <end position="31"/>
    </location>
</feature>
<feature type="transmembrane region" description="Helical" evidence="1">
    <location>
        <begin position="35"/>
        <end position="55"/>
    </location>
</feature>
<feature type="transmembrane region" description="Helical" evidence="1">
    <location>
        <begin position="81"/>
        <end position="101"/>
    </location>
</feature>
<feature type="transmembrane region" description="Helical" evidence="1">
    <location>
        <begin position="114"/>
        <end position="134"/>
    </location>
</feature>
<feature type="transmembrane region" description="Helical" evidence="1">
    <location>
        <begin position="144"/>
        <end position="164"/>
    </location>
</feature>
<feature type="transmembrane region" description="Helical" evidence="1">
    <location>
        <begin position="180"/>
        <end position="200"/>
    </location>
</feature>
<sequence>MEHYISLFVKAVFVENMALAFFLGMCTFIAISKKVETAIGLGIAVIVVQTITVPANNLIYTYLLKDGALAWAGLPEVDLSFLGLLSYIGVIAAIVQILEMLLDKYVPSLYNALGVFLPLITVNCAIMAGSLFMVERDYNLAESTVYGVGSGFSWALAIAALAGIREKLKYSDVPEGLQGLGITFITIGLMSLGFMSFSGVQL</sequence>
<name>NQRE_PSEAB</name>
<protein>
    <recommendedName>
        <fullName evidence="1">Na(+)-translocating NADH-quinone reductase subunit E</fullName>
        <shortName evidence="1">Na(+)-NQR subunit E</shortName>
        <shortName evidence="1">Na(+)-translocating NQR subunit E</shortName>
        <ecNumber evidence="1">7.2.1.1</ecNumber>
    </recommendedName>
    <alternativeName>
        <fullName evidence="1">NQR complex subunit E</fullName>
    </alternativeName>
    <alternativeName>
        <fullName evidence="1">NQR-1 subunit E</fullName>
    </alternativeName>
</protein>
<reference key="1">
    <citation type="journal article" date="2006" name="Genome Biol.">
        <title>Genomic analysis reveals that Pseudomonas aeruginosa virulence is combinatorial.</title>
        <authorList>
            <person name="Lee D.G."/>
            <person name="Urbach J.M."/>
            <person name="Wu G."/>
            <person name="Liberati N.T."/>
            <person name="Feinbaum R.L."/>
            <person name="Miyata S."/>
            <person name="Diggins L.T."/>
            <person name="He J."/>
            <person name="Saucier M."/>
            <person name="Deziel E."/>
            <person name="Friedman L."/>
            <person name="Li L."/>
            <person name="Grills G."/>
            <person name="Montgomery K."/>
            <person name="Kucherlapati R."/>
            <person name="Rahme L.G."/>
            <person name="Ausubel F.M."/>
        </authorList>
    </citation>
    <scope>NUCLEOTIDE SEQUENCE [LARGE SCALE GENOMIC DNA]</scope>
    <source>
        <strain>UCBPP-PA14</strain>
    </source>
</reference>
<proteinExistence type="inferred from homology"/>